<evidence type="ECO:0000255" key="1">
    <source>
        <dbReference type="HAMAP-Rule" id="MF_03138"/>
    </source>
</evidence>
<evidence type="ECO:0000269" key="2">
    <source>
    </source>
</evidence>
<evidence type="ECO:0000305" key="3"/>
<protein>
    <recommendedName>
        <fullName evidence="1">Translation factor GUF1 homolog, chloroplastic</fullName>
        <ecNumber>3.6.5.-</ecNumber>
    </recommendedName>
    <alternativeName>
        <fullName evidence="1">Elongation factor 4 homolog</fullName>
        <shortName evidence="1">EF-4</shortName>
    </alternativeName>
    <alternativeName>
        <fullName evidence="1">GTPase GUF1 homolog</fullName>
    </alternativeName>
    <alternativeName>
        <fullName evidence="1">Ribosomal back-translocase</fullName>
    </alternativeName>
</protein>
<sequence>MAMASAMDLSSPPTFFLSGTSTSSPSLRRLSSISVSGFRRHSNRKLQILCQATAGTEPQSGLSVSGSKLAARSGQDRLLKVPISNIRNFSIIAHIDHGKSTLADKLLQVTGTVQNRDMKEQFLDNMDLERERGITIKLQAARMRYVYEDTPFCLNLIDTPGHVDFSYEVSRSLAACEGALLVVDASQGVEAQTLANVYLALENNLEIIPVLNKIDLPGAEPEKVLREIEEVIGLDCSKAIFCSAKEGIGITEILDAIVQRIPAPLDTAGKPLRALIFDSYYDPYRGVIVYFRVIDGKVKKGDRIFFMASGKDYFADEVGVLSPNQIQVDELYAGEVGYIAASVRSVADARVGDTITHYSRKAESSLPGYEEATPMVFCGLFPVDADQFPDLRDALEKLQLNDAALKFEPETSSAMGFGFRCGFLGLLHMEIVQERLEREYNLNLITTAPSVVYRVNSVNGDTTLCSNPSRLPDPGQRKSVEEPYVKIELLTPKDYIGALMELAQERRGEFKEMKYIAENRASILYELPLAEMVGDFFDQLKSRTKGYASMEYSVIGYRESDLIKLDILINAEMVEPLSTIVHRDKAYSVGRALTQKLKELIPRQMFKVPIQACIGSKVIASEALSAIRKDVLAKCYGGDISRKKKLLKKQAAGKKRMKAIGRVDVPQEAFMAVLKLEREVL</sequence>
<organism>
    <name type="scientific">Arabidopsis thaliana</name>
    <name type="common">Mouse-ear cress</name>
    <dbReference type="NCBI Taxonomy" id="3702"/>
    <lineage>
        <taxon>Eukaryota</taxon>
        <taxon>Viridiplantae</taxon>
        <taxon>Streptophyta</taxon>
        <taxon>Embryophyta</taxon>
        <taxon>Tracheophyta</taxon>
        <taxon>Spermatophyta</taxon>
        <taxon>Magnoliopsida</taxon>
        <taxon>eudicotyledons</taxon>
        <taxon>Gunneridae</taxon>
        <taxon>Pentapetalae</taxon>
        <taxon>rosids</taxon>
        <taxon>malvids</taxon>
        <taxon>Brassicales</taxon>
        <taxon>Brassicaceae</taxon>
        <taxon>Camelineae</taxon>
        <taxon>Arabidopsis</taxon>
    </lineage>
</organism>
<proteinExistence type="evidence at protein level"/>
<accession>Q9FNM5</accession>
<accession>Q8RWP3</accession>
<dbReference type="EC" id="3.6.5.-"/>
<dbReference type="EMBL" id="AB006697">
    <property type="protein sequence ID" value="BAB10014.1"/>
    <property type="status" value="ALT_INIT"/>
    <property type="molecule type" value="Genomic_DNA"/>
</dbReference>
<dbReference type="EMBL" id="CP002688">
    <property type="protein sequence ID" value="AED91334.1"/>
    <property type="molecule type" value="Genomic_DNA"/>
</dbReference>
<dbReference type="EMBL" id="AY092958">
    <property type="protein sequence ID" value="AAM12957.1"/>
    <property type="molecule type" value="mRNA"/>
</dbReference>
<dbReference type="EMBL" id="AY128719">
    <property type="protein sequence ID" value="AAM91119.1"/>
    <property type="molecule type" value="mRNA"/>
</dbReference>
<dbReference type="RefSeq" id="NP_196482.2">
    <property type="nucleotide sequence ID" value="NM_120952.6"/>
</dbReference>
<dbReference type="SMR" id="Q9FNM5"/>
<dbReference type="BioGRID" id="16044">
    <property type="interactions" value="5"/>
</dbReference>
<dbReference type="FunCoup" id="Q9FNM5">
    <property type="interactions" value="833"/>
</dbReference>
<dbReference type="IntAct" id="Q9FNM5">
    <property type="interactions" value="5"/>
</dbReference>
<dbReference type="STRING" id="3702.Q9FNM5"/>
<dbReference type="iPTMnet" id="Q9FNM5"/>
<dbReference type="PaxDb" id="3702-AT5G08650.1"/>
<dbReference type="ProteomicsDB" id="247238"/>
<dbReference type="EnsemblPlants" id="AT5G08650.1">
    <property type="protein sequence ID" value="AT5G08650.1"/>
    <property type="gene ID" value="AT5G08650"/>
</dbReference>
<dbReference type="GeneID" id="830766"/>
<dbReference type="Gramene" id="AT5G08650.1">
    <property type="protein sequence ID" value="AT5G08650.1"/>
    <property type="gene ID" value="AT5G08650"/>
</dbReference>
<dbReference type="KEGG" id="ath:AT5G08650"/>
<dbReference type="Araport" id="AT5G08650"/>
<dbReference type="TAIR" id="AT5G08650"/>
<dbReference type="eggNOG" id="KOG0462">
    <property type="taxonomic scope" value="Eukaryota"/>
</dbReference>
<dbReference type="HOGENOM" id="CLU_009995_3_3_1"/>
<dbReference type="InParanoid" id="Q9FNM5"/>
<dbReference type="OrthoDB" id="1074at2759"/>
<dbReference type="PhylomeDB" id="Q9FNM5"/>
<dbReference type="PRO" id="PR:Q9FNM5"/>
<dbReference type="Proteomes" id="UP000006548">
    <property type="component" value="Chromosome 5"/>
</dbReference>
<dbReference type="ExpressionAtlas" id="Q9FNM5">
    <property type="expression patterns" value="baseline and differential"/>
</dbReference>
<dbReference type="GO" id="GO:0009507">
    <property type="term" value="C:chloroplast"/>
    <property type="evidence" value="ECO:0007005"/>
    <property type="project" value="TAIR"/>
</dbReference>
<dbReference type="GO" id="GO:0005886">
    <property type="term" value="C:plasma membrane"/>
    <property type="evidence" value="ECO:0007005"/>
    <property type="project" value="TAIR"/>
</dbReference>
<dbReference type="GO" id="GO:0005525">
    <property type="term" value="F:GTP binding"/>
    <property type="evidence" value="ECO:0007669"/>
    <property type="project" value="UniProtKB-UniRule"/>
</dbReference>
<dbReference type="GO" id="GO:0003924">
    <property type="term" value="F:GTPase activity"/>
    <property type="evidence" value="ECO:0007669"/>
    <property type="project" value="UniProtKB-UniRule"/>
</dbReference>
<dbReference type="GO" id="GO:0003729">
    <property type="term" value="F:mRNA binding"/>
    <property type="evidence" value="ECO:0000314"/>
    <property type="project" value="TAIR"/>
</dbReference>
<dbReference type="GO" id="GO:0019904">
    <property type="term" value="F:protein domain specific binding"/>
    <property type="evidence" value="ECO:0000353"/>
    <property type="project" value="CAFA"/>
</dbReference>
<dbReference type="GO" id="GO:0045727">
    <property type="term" value="P:positive regulation of translation"/>
    <property type="evidence" value="ECO:0007669"/>
    <property type="project" value="UniProtKB-UniRule"/>
</dbReference>
<dbReference type="GO" id="GO:0006412">
    <property type="term" value="P:translation"/>
    <property type="evidence" value="ECO:0007669"/>
    <property type="project" value="UniProtKB-KW"/>
</dbReference>
<dbReference type="CDD" id="cd03699">
    <property type="entry name" value="EF4_II"/>
    <property type="match status" value="1"/>
</dbReference>
<dbReference type="CDD" id="cd16260">
    <property type="entry name" value="EF4_III"/>
    <property type="match status" value="1"/>
</dbReference>
<dbReference type="CDD" id="cd01890">
    <property type="entry name" value="LepA"/>
    <property type="match status" value="1"/>
</dbReference>
<dbReference type="CDD" id="cd03709">
    <property type="entry name" value="lepA_C"/>
    <property type="match status" value="1"/>
</dbReference>
<dbReference type="FunFam" id="3.40.50.300:FF:000078">
    <property type="entry name" value="Elongation factor 4"/>
    <property type="match status" value="1"/>
</dbReference>
<dbReference type="FunFam" id="2.40.30.10:FF:000015">
    <property type="entry name" value="Translation factor GUF1, mitochondrial"/>
    <property type="match status" value="1"/>
</dbReference>
<dbReference type="FunFam" id="3.30.70.240:FF:000007">
    <property type="entry name" value="Translation factor GUF1, mitochondrial"/>
    <property type="match status" value="1"/>
</dbReference>
<dbReference type="FunFam" id="3.30.70.2570:FF:000001">
    <property type="entry name" value="Translation factor GUF1, mitochondrial"/>
    <property type="match status" value="1"/>
</dbReference>
<dbReference type="FunFam" id="3.30.70.870:FF:000004">
    <property type="entry name" value="Translation factor GUF1, mitochondrial"/>
    <property type="match status" value="1"/>
</dbReference>
<dbReference type="Gene3D" id="3.30.70.240">
    <property type="match status" value="1"/>
</dbReference>
<dbReference type="Gene3D" id="3.30.70.2570">
    <property type="entry name" value="Elongation factor 4, C-terminal domain"/>
    <property type="match status" value="1"/>
</dbReference>
<dbReference type="Gene3D" id="3.30.70.870">
    <property type="entry name" value="Elongation Factor G (Translational Gtpase), domain 3"/>
    <property type="match status" value="1"/>
</dbReference>
<dbReference type="Gene3D" id="3.40.50.300">
    <property type="entry name" value="P-loop containing nucleotide triphosphate hydrolases"/>
    <property type="match status" value="1"/>
</dbReference>
<dbReference type="Gene3D" id="2.40.30.10">
    <property type="entry name" value="Translation factors"/>
    <property type="match status" value="1"/>
</dbReference>
<dbReference type="HAMAP" id="MF_03138">
    <property type="entry name" value="GUFP"/>
    <property type="match status" value="1"/>
</dbReference>
<dbReference type="HAMAP" id="MF_00071">
    <property type="entry name" value="LepA"/>
    <property type="match status" value="1"/>
</dbReference>
<dbReference type="InterPro" id="IPR006297">
    <property type="entry name" value="EF-4"/>
</dbReference>
<dbReference type="InterPro" id="IPR035647">
    <property type="entry name" value="EFG_III/V"/>
</dbReference>
<dbReference type="InterPro" id="IPR000640">
    <property type="entry name" value="EFG_V-like"/>
</dbReference>
<dbReference type="InterPro" id="IPR004161">
    <property type="entry name" value="EFTu-like_2"/>
</dbReference>
<dbReference type="InterPro" id="IPR031157">
    <property type="entry name" value="G_TR_CS"/>
</dbReference>
<dbReference type="InterPro" id="IPR027518">
    <property type="entry name" value="GUFP"/>
</dbReference>
<dbReference type="InterPro" id="IPR038363">
    <property type="entry name" value="LepA_C_sf"/>
</dbReference>
<dbReference type="InterPro" id="IPR013842">
    <property type="entry name" value="LepA_CTD"/>
</dbReference>
<dbReference type="InterPro" id="IPR035654">
    <property type="entry name" value="LepA_IV"/>
</dbReference>
<dbReference type="InterPro" id="IPR027417">
    <property type="entry name" value="P-loop_NTPase"/>
</dbReference>
<dbReference type="InterPro" id="IPR005225">
    <property type="entry name" value="Small_GTP-bd"/>
</dbReference>
<dbReference type="InterPro" id="IPR000795">
    <property type="entry name" value="T_Tr_GTP-bd_dom"/>
</dbReference>
<dbReference type="InterPro" id="IPR009000">
    <property type="entry name" value="Transl_B-barrel_sf"/>
</dbReference>
<dbReference type="NCBIfam" id="TIGR01393">
    <property type="entry name" value="lepA"/>
    <property type="match status" value="1"/>
</dbReference>
<dbReference type="NCBIfam" id="TIGR00231">
    <property type="entry name" value="small_GTP"/>
    <property type="match status" value="1"/>
</dbReference>
<dbReference type="PANTHER" id="PTHR43512:SF4">
    <property type="entry name" value="TRANSLATION FACTOR GUF1 HOMOLOG, CHLOROPLASTIC"/>
    <property type="match status" value="1"/>
</dbReference>
<dbReference type="PANTHER" id="PTHR43512">
    <property type="entry name" value="TRANSLATION FACTOR GUF1-RELATED"/>
    <property type="match status" value="1"/>
</dbReference>
<dbReference type="Pfam" id="PF00679">
    <property type="entry name" value="EFG_C"/>
    <property type="match status" value="1"/>
</dbReference>
<dbReference type="Pfam" id="PF00009">
    <property type="entry name" value="GTP_EFTU"/>
    <property type="match status" value="1"/>
</dbReference>
<dbReference type="Pfam" id="PF03144">
    <property type="entry name" value="GTP_EFTU_D2"/>
    <property type="match status" value="1"/>
</dbReference>
<dbReference type="Pfam" id="PF06421">
    <property type="entry name" value="LepA_C"/>
    <property type="match status" value="1"/>
</dbReference>
<dbReference type="PRINTS" id="PR00315">
    <property type="entry name" value="ELONGATNFCT"/>
</dbReference>
<dbReference type="SMART" id="SM00838">
    <property type="entry name" value="EFG_C"/>
    <property type="match status" value="1"/>
</dbReference>
<dbReference type="SUPFAM" id="SSF54980">
    <property type="entry name" value="EF-G C-terminal domain-like"/>
    <property type="match status" value="2"/>
</dbReference>
<dbReference type="SUPFAM" id="SSF52540">
    <property type="entry name" value="P-loop containing nucleoside triphosphate hydrolases"/>
    <property type="match status" value="1"/>
</dbReference>
<dbReference type="SUPFAM" id="SSF50447">
    <property type="entry name" value="Translation proteins"/>
    <property type="match status" value="1"/>
</dbReference>
<dbReference type="PROSITE" id="PS00301">
    <property type="entry name" value="G_TR_1"/>
    <property type="match status" value="1"/>
</dbReference>
<dbReference type="PROSITE" id="PS51722">
    <property type="entry name" value="G_TR_2"/>
    <property type="match status" value="1"/>
</dbReference>
<name>GUFP_ARATH</name>
<reference key="1">
    <citation type="journal article" date="1997" name="DNA Res.">
        <title>Structural analysis of Arabidopsis thaliana chromosome 5. II. Sequence features of the regions of 1,044,062 bp covered by thirteen physically assigned P1 clones.</title>
        <authorList>
            <person name="Kotani H."/>
            <person name="Nakamura Y."/>
            <person name="Sato S."/>
            <person name="Kaneko T."/>
            <person name="Asamizu E."/>
            <person name="Miyajima N."/>
            <person name="Tabata S."/>
        </authorList>
    </citation>
    <scope>NUCLEOTIDE SEQUENCE [LARGE SCALE GENOMIC DNA]</scope>
    <source>
        <strain>cv. Columbia</strain>
    </source>
</reference>
<reference key="2">
    <citation type="journal article" date="2017" name="Plant J.">
        <title>Araport11: a complete reannotation of the Arabidopsis thaliana reference genome.</title>
        <authorList>
            <person name="Cheng C.Y."/>
            <person name="Krishnakumar V."/>
            <person name="Chan A.P."/>
            <person name="Thibaud-Nissen F."/>
            <person name="Schobel S."/>
            <person name="Town C.D."/>
        </authorList>
    </citation>
    <scope>GENOME REANNOTATION</scope>
    <source>
        <strain>cv. Columbia</strain>
    </source>
</reference>
<reference key="3">
    <citation type="journal article" date="2003" name="Science">
        <title>Empirical analysis of transcriptional activity in the Arabidopsis genome.</title>
        <authorList>
            <person name="Yamada K."/>
            <person name="Lim J."/>
            <person name="Dale J.M."/>
            <person name="Chen H."/>
            <person name="Shinn P."/>
            <person name="Palm C.J."/>
            <person name="Southwick A.M."/>
            <person name="Wu H.C."/>
            <person name="Kim C.J."/>
            <person name="Nguyen M."/>
            <person name="Pham P.K."/>
            <person name="Cheuk R.F."/>
            <person name="Karlin-Newmann G."/>
            <person name="Liu S.X."/>
            <person name="Lam B."/>
            <person name="Sakano H."/>
            <person name="Wu T."/>
            <person name="Yu G."/>
            <person name="Miranda M."/>
            <person name="Quach H.L."/>
            <person name="Tripp M."/>
            <person name="Chang C.H."/>
            <person name="Lee J.M."/>
            <person name="Toriumi M.J."/>
            <person name="Chan M.M."/>
            <person name="Tang C.C."/>
            <person name="Onodera C.S."/>
            <person name="Deng J.M."/>
            <person name="Akiyama K."/>
            <person name="Ansari Y."/>
            <person name="Arakawa T."/>
            <person name="Banh J."/>
            <person name="Banno F."/>
            <person name="Bowser L."/>
            <person name="Brooks S.Y."/>
            <person name="Carninci P."/>
            <person name="Chao Q."/>
            <person name="Choy N."/>
            <person name="Enju A."/>
            <person name="Goldsmith A.D."/>
            <person name="Gurjal M."/>
            <person name="Hansen N.F."/>
            <person name="Hayashizaki Y."/>
            <person name="Johnson-Hopson C."/>
            <person name="Hsuan V.W."/>
            <person name="Iida K."/>
            <person name="Karnes M."/>
            <person name="Khan S."/>
            <person name="Koesema E."/>
            <person name="Ishida J."/>
            <person name="Jiang P.X."/>
            <person name="Jones T."/>
            <person name="Kawai J."/>
            <person name="Kamiya A."/>
            <person name="Meyers C."/>
            <person name="Nakajima M."/>
            <person name="Narusaka M."/>
            <person name="Seki M."/>
            <person name="Sakurai T."/>
            <person name="Satou M."/>
            <person name="Tamse R."/>
            <person name="Vaysberg M."/>
            <person name="Wallender E.K."/>
            <person name="Wong C."/>
            <person name="Yamamura Y."/>
            <person name="Yuan S."/>
            <person name="Shinozaki K."/>
            <person name="Davis R.W."/>
            <person name="Theologis A."/>
            <person name="Ecker J.R."/>
        </authorList>
    </citation>
    <scope>NUCLEOTIDE SEQUENCE [LARGE SCALE MRNA]</scope>
    <source>
        <strain>cv. Columbia</strain>
    </source>
</reference>
<reference key="4">
    <citation type="journal article" date="2008" name="PLoS ONE">
        <title>Sorting signals, N-terminal modifications and abundance of the chloroplast proteome.</title>
        <authorList>
            <person name="Zybailov B."/>
            <person name="Rutschow H."/>
            <person name="Friso G."/>
            <person name="Rudella A."/>
            <person name="Emanuelsson O."/>
            <person name="Sun Q."/>
            <person name="van Wijk K.J."/>
        </authorList>
    </citation>
    <scope>IDENTIFICATION BY MASS SPECTROMETRY</scope>
    <scope>SUBCELLULAR LOCATION [LARGE SCALE ANALYSIS]</scope>
</reference>
<feature type="transit peptide" description="Chloroplast" evidence="1 3">
    <location>
        <begin position="1"/>
        <end position="51"/>
    </location>
</feature>
<feature type="chain" id="PRO_0000402913" description="Translation factor GUF1 homolog, chloroplastic">
    <location>
        <begin position="52"/>
        <end position="681"/>
    </location>
</feature>
<feature type="domain" description="tr-type G">
    <location>
        <begin position="84"/>
        <end position="265"/>
    </location>
</feature>
<feature type="binding site" evidence="1">
    <location>
        <begin position="93"/>
        <end position="100"/>
    </location>
    <ligand>
        <name>GTP</name>
        <dbReference type="ChEBI" id="CHEBI:37565"/>
    </ligand>
</feature>
<feature type="binding site" evidence="1">
    <location>
        <begin position="158"/>
        <end position="162"/>
    </location>
    <ligand>
        <name>GTP</name>
        <dbReference type="ChEBI" id="CHEBI:37565"/>
    </ligand>
</feature>
<feature type="binding site" evidence="1">
    <location>
        <begin position="212"/>
        <end position="215"/>
    </location>
    <ligand>
        <name>GTP</name>
        <dbReference type="ChEBI" id="CHEBI:37565"/>
    </ligand>
</feature>
<feature type="sequence conflict" description="In Ref. 3; AAM12957/AAM91119." evidence="3" ref="3">
    <original>L</original>
    <variation>I</variation>
    <location>
        <position position="275"/>
    </location>
</feature>
<feature type="sequence conflict" description="In Ref. 3; AAM12957/AAM91119." evidence="3" ref="3">
    <original>I</original>
    <variation>T</variation>
    <location>
        <position position="431"/>
    </location>
</feature>
<gene>
    <name type="ordered locus">At5g08650</name>
    <name type="ORF">T2K12.1</name>
</gene>
<comment type="function">
    <text evidence="1">Promotes chloroplast protein synthesis. May act as a fidelity factor of the translation reaction, by catalyzing a one-codon backward translocation of tRNAs on improperly translocated ribosomes.</text>
</comment>
<comment type="catalytic activity">
    <reaction evidence="1">
        <text>GTP + H2O = GDP + phosphate + H(+)</text>
        <dbReference type="Rhea" id="RHEA:19669"/>
        <dbReference type="ChEBI" id="CHEBI:15377"/>
        <dbReference type="ChEBI" id="CHEBI:15378"/>
        <dbReference type="ChEBI" id="CHEBI:37565"/>
        <dbReference type="ChEBI" id="CHEBI:43474"/>
        <dbReference type="ChEBI" id="CHEBI:58189"/>
    </reaction>
</comment>
<comment type="subcellular location">
    <subcellularLocation>
        <location evidence="2">Plastid</location>
        <location evidence="2">Chloroplast</location>
    </subcellularLocation>
</comment>
<comment type="similarity">
    <text evidence="1">Belongs to the TRAFAC class translation factor GTPase superfamily. Classic translation factor GTPase family. LepA subfamily.</text>
</comment>
<comment type="sequence caution" evidence="3">
    <conflict type="erroneous initiation">
        <sequence resource="EMBL-CDS" id="BAB10014"/>
    </conflict>
    <text>Truncated N-terminus.</text>
</comment>
<keyword id="KW-0150">Chloroplast</keyword>
<keyword id="KW-0342">GTP-binding</keyword>
<keyword id="KW-0378">Hydrolase</keyword>
<keyword id="KW-0547">Nucleotide-binding</keyword>
<keyword id="KW-0934">Plastid</keyword>
<keyword id="KW-0648">Protein biosynthesis</keyword>
<keyword id="KW-1185">Reference proteome</keyword>
<keyword id="KW-0809">Transit peptide</keyword>